<proteinExistence type="inferred from homology"/>
<comment type="function">
    <text evidence="2">Involved in histidine uptake. Has low affinity for arginine and lysine. Plays no significant role in the excretion of accumulated histidine.</text>
</comment>
<comment type="subcellular location">
    <subcellularLocation>
        <location evidence="4">Cell membrane</location>
        <topology evidence="1">Multi-pass membrane protein</topology>
    </subcellularLocation>
</comment>
<comment type="disruption phenotype">
    <text evidence="2">Deletion of the gene leads to strong reduction of histidine uptake.</text>
</comment>
<comment type="similarity">
    <text evidence="4">Belongs to the amino acid-polyamine-organocation (APC) superfamily. Amino acid transporter (AAT) (TC 2.A.3.1) family.</text>
</comment>
<gene>
    <name evidence="3" type="primary">hisP</name>
    <name evidence="5" type="synonym">lysQ</name>
    <name evidence="5" type="ordered locus">llmg_0386</name>
</gene>
<keyword id="KW-0029">Amino-acid transport</keyword>
<keyword id="KW-1003">Cell membrane</keyword>
<keyword id="KW-0472">Membrane</keyword>
<keyword id="KW-0812">Transmembrane</keyword>
<keyword id="KW-1133">Transmembrane helix</keyword>
<keyword id="KW-0813">Transport</keyword>
<organism>
    <name type="scientific">Lactococcus lactis subsp. cremoris (strain MG1363)</name>
    <dbReference type="NCBI Taxonomy" id="416870"/>
    <lineage>
        <taxon>Bacteria</taxon>
        <taxon>Bacillati</taxon>
        <taxon>Bacillota</taxon>
        <taxon>Bacilli</taxon>
        <taxon>Lactobacillales</taxon>
        <taxon>Streptococcaceae</taxon>
        <taxon>Lactococcus</taxon>
        <taxon>Lactococcus cremoris subsp. cremoris</taxon>
    </lineage>
</organism>
<dbReference type="EMBL" id="AM406671">
    <property type="protein sequence ID" value="CAL96991.1"/>
    <property type="molecule type" value="Genomic_DNA"/>
</dbReference>
<dbReference type="RefSeq" id="WP_011834439.1">
    <property type="nucleotide sequence ID" value="NC_009004.1"/>
</dbReference>
<dbReference type="SMR" id="A2RI97"/>
<dbReference type="STRING" id="416870.llmg_0386"/>
<dbReference type="KEGG" id="llm:llmg_0386"/>
<dbReference type="eggNOG" id="COG0833">
    <property type="taxonomic scope" value="Bacteria"/>
</dbReference>
<dbReference type="HOGENOM" id="CLU_007946_9_2_9"/>
<dbReference type="OrthoDB" id="9780162at2"/>
<dbReference type="PhylomeDB" id="A2RI97"/>
<dbReference type="Proteomes" id="UP000000364">
    <property type="component" value="Chromosome"/>
</dbReference>
<dbReference type="GO" id="GO:0005886">
    <property type="term" value="C:plasma membrane"/>
    <property type="evidence" value="ECO:0007669"/>
    <property type="project" value="UniProtKB-SubCell"/>
</dbReference>
<dbReference type="GO" id="GO:0015171">
    <property type="term" value="F:amino acid transmembrane transporter activity"/>
    <property type="evidence" value="ECO:0007669"/>
    <property type="project" value="TreeGrafter"/>
</dbReference>
<dbReference type="FunFam" id="1.20.1740.10:FF:000001">
    <property type="entry name" value="Amino acid permease"/>
    <property type="match status" value="1"/>
</dbReference>
<dbReference type="Gene3D" id="1.20.1740.10">
    <property type="entry name" value="Amino acid/polyamine transporter I"/>
    <property type="match status" value="1"/>
</dbReference>
<dbReference type="InterPro" id="IPR004841">
    <property type="entry name" value="AA-permease/SLC12A_dom"/>
</dbReference>
<dbReference type="InterPro" id="IPR004840">
    <property type="entry name" value="Amino_acid_permease_CS"/>
</dbReference>
<dbReference type="InterPro" id="IPR050524">
    <property type="entry name" value="APC_YAT"/>
</dbReference>
<dbReference type="PANTHER" id="PTHR43341">
    <property type="entry name" value="AMINO ACID PERMEASE"/>
    <property type="match status" value="1"/>
</dbReference>
<dbReference type="PANTHER" id="PTHR43341:SF1">
    <property type="entry name" value="GENERAL AMINO-ACID PERMEASE GAP1"/>
    <property type="match status" value="1"/>
</dbReference>
<dbReference type="Pfam" id="PF00324">
    <property type="entry name" value="AA_permease"/>
    <property type="match status" value="1"/>
</dbReference>
<dbReference type="PIRSF" id="PIRSF006060">
    <property type="entry name" value="AA_transporter"/>
    <property type="match status" value="1"/>
</dbReference>
<dbReference type="PROSITE" id="PS00218">
    <property type="entry name" value="AMINO_ACID_PERMEASE_1"/>
    <property type="match status" value="1"/>
</dbReference>
<sequence>MENQNQVKRNLKQRHITMIALGGTIGTGLFLTSGATISQAGPWGAVLAYCFIGIMVYFVMTSLGEMATYLPTSGSFSDYGGRYVDPAFGFALGWNYWLNGAITIAVDLTTAGLITQFWFPHLPSWIFSGIATVLIFIINVMAVGAFGETEYWLSTIKVITIVLFLAIGLLTIFGVLGQGNVDVVANLTAGNHGFVGGISGFVGVLLIAGFSFQGTEMLGITAGESEDPGKTIPKAMNSIFWRILLFYIFSIIVIAAIINFKDPRLLNPSSTAVMSPFTIVFKNIGFAVAASVMNAVILTSVISSANSVMYASTRILYSLGQEKGAPKFFGRTAKNGIPFYALLATTIICFIAFLTGIFGTQIYLFLIDLSSLTGFLAWLGISVSHIRFRRAYIAQGKKLEDLPYKAKWFPFGPIVALLMTGAIAINLDPAMLFSEHWGEGLALYAAIPIFIVLYFGYKWKYNTKIIPLEEVDLSREK</sequence>
<name>HISP_LACLM</name>
<feature type="chain" id="PRO_0000442540" description="Histidine permease HisP">
    <location>
        <begin position="1"/>
        <end position="477"/>
    </location>
</feature>
<feature type="transmembrane region" description="Helical" evidence="1">
    <location>
        <begin position="16"/>
        <end position="36"/>
    </location>
</feature>
<feature type="transmembrane region" description="Helical" evidence="1">
    <location>
        <begin position="40"/>
        <end position="60"/>
    </location>
</feature>
<feature type="transmembrane region" description="Helical" evidence="1">
    <location>
        <begin position="86"/>
        <end position="106"/>
    </location>
</feature>
<feature type="transmembrane region" description="Helical" evidence="1">
    <location>
        <begin position="126"/>
        <end position="146"/>
    </location>
</feature>
<feature type="transmembrane region" description="Helical" evidence="1">
    <location>
        <begin position="156"/>
        <end position="176"/>
    </location>
</feature>
<feature type="transmembrane region" description="Helical" evidence="1">
    <location>
        <begin position="192"/>
        <end position="212"/>
    </location>
</feature>
<feature type="transmembrane region" description="Helical" evidence="1">
    <location>
        <begin position="238"/>
        <end position="258"/>
    </location>
</feature>
<feature type="transmembrane region" description="Helical" evidence="1">
    <location>
        <begin position="284"/>
        <end position="304"/>
    </location>
</feature>
<feature type="transmembrane region" description="Helical" evidence="1">
    <location>
        <begin position="337"/>
        <end position="359"/>
    </location>
</feature>
<feature type="transmembrane region" description="Helical" evidence="1">
    <location>
        <begin position="364"/>
        <end position="386"/>
    </location>
</feature>
<feature type="transmembrane region" description="Helical" evidence="1">
    <location>
        <begin position="408"/>
        <end position="428"/>
    </location>
</feature>
<feature type="transmembrane region" description="Helical" evidence="1">
    <location>
        <begin position="437"/>
        <end position="457"/>
    </location>
</feature>
<reference key="1">
    <citation type="journal article" date="2007" name="J. Bacteriol.">
        <title>The complete genome sequence of the lactic acid bacterial paradigm Lactococcus lactis subsp. cremoris MG1363.</title>
        <authorList>
            <person name="Wegmann U."/>
            <person name="O'Connell-Motherway M."/>
            <person name="Zomer A."/>
            <person name="Buist G."/>
            <person name="Shearman C."/>
            <person name="Canchaya C."/>
            <person name="Ventura M."/>
            <person name="Goesmann A."/>
            <person name="Gasson M.J."/>
            <person name="Kuipers O.P."/>
            <person name="van Sinderen D."/>
            <person name="Kok J."/>
        </authorList>
    </citation>
    <scope>NUCLEOTIDE SEQUENCE [LARGE SCALE GENOMIC DNA]</scope>
    <source>
        <strain>MG1363</strain>
    </source>
</reference>
<reference key="2">
    <citation type="journal article" date="2013" name="J. Bacteriol.">
        <title>Cloning, expression, and functional characterization of secondary amino acid transporters of Lactococcus lactis.</title>
        <authorList>
            <person name="Trip H."/>
            <person name="Mulder N.L."/>
            <person name="Lolkema J.S."/>
        </authorList>
    </citation>
    <scope>FUNCTION</scope>
    <scope>DISRUPTION PHENOTYPE</scope>
    <source>
        <strain>MG1363</strain>
    </source>
</reference>
<accession>A2RI97</accession>
<protein>
    <recommendedName>
        <fullName evidence="4">Histidine permease HisP</fullName>
    </recommendedName>
</protein>
<evidence type="ECO:0000255" key="1"/>
<evidence type="ECO:0000269" key="2">
    <source>
    </source>
</evidence>
<evidence type="ECO:0000303" key="3">
    <source>
    </source>
</evidence>
<evidence type="ECO:0000305" key="4"/>
<evidence type="ECO:0000312" key="5">
    <source>
        <dbReference type="EMBL" id="CAL96991.1"/>
    </source>
</evidence>